<sequence length="359" mass="38592">MVRLSNLVSCLGLASAVTAAVVDLVPKNFDDVVLKSGKPALVEFFAPWCGHCKNLAPVYEELGQAFAHASDKVTVGKVDADEHRDLGRKFGVQGFPTLKWFDGKSDEPEDYKGGRDLESLSSFISEKTGVKPRGPKKEPSKVEMLNDATFKGAVGGDNDVLVAFTAPWCGHCKNLAPTWEALANDFVLEPNVVIAKVDADAENGKATAREQGVSGYPTIKFFPKGSTESVPYEGARSEQAFIDFLNEKTGTHRTVGGGLDTKAGTIASLDELIASTSAADLAAAVKKAATELKDKYAQYYVKVADKLSQNAEYAAKELARLEKILAKGGSAPEKVDDLISRSNILRKFVGEEKEAKDEL</sequence>
<evidence type="ECO:0000250" key="1"/>
<evidence type="ECO:0000255" key="2"/>
<evidence type="ECO:0000255" key="3">
    <source>
        <dbReference type="PROSITE-ProRule" id="PRU00691"/>
    </source>
</evidence>
<evidence type="ECO:0000255" key="4">
    <source>
        <dbReference type="PROSITE-ProRule" id="PRU10138"/>
    </source>
</evidence>
<evidence type="ECO:0000269" key="5">
    <source>
    </source>
</evidence>
<evidence type="ECO:0000305" key="6"/>
<comment type="catalytic activity">
    <reaction>
        <text>Catalyzes the rearrangement of -S-S- bonds in proteins.</text>
        <dbReference type="EC" id="5.3.4.1"/>
    </reaction>
</comment>
<comment type="subcellular location">
    <subcellularLocation>
        <location evidence="4">Endoplasmic reticulum lumen</location>
    </subcellularLocation>
</comment>
<comment type="induction">
    <text evidence="5">By stress, and tunicamycin.</text>
</comment>
<comment type="similarity">
    <text evidence="6">Belongs to the protein disulfide isomerase family.</text>
</comment>
<feature type="signal peptide" evidence="2">
    <location>
        <begin position="1"/>
        <end position="19"/>
    </location>
</feature>
<feature type="chain" id="PRO_0000034245" description="Protein disulfide-isomerase tigA">
    <location>
        <begin position="20"/>
        <end position="359"/>
    </location>
</feature>
<feature type="domain" description="Thioredoxin 1" evidence="3">
    <location>
        <begin position="20"/>
        <end position="129"/>
    </location>
</feature>
<feature type="domain" description="Thioredoxin 2" evidence="3">
    <location>
        <begin position="131"/>
        <end position="250"/>
    </location>
</feature>
<feature type="short sequence motif" description="Prevents secretion from ER" evidence="4">
    <location>
        <begin position="356"/>
        <end position="359"/>
    </location>
</feature>
<feature type="active site" description="Nucleophile" evidence="1">
    <location>
        <position position="49"/>
    </location>
</feature>
<feature type="active site" description="Nucleophile" evidence="1">
    <location>
        <position position="52"/>
    </location>
</feature>
<feature type="active site" description="Nucleophile" evidence="1">
    <location>
        <position position="169"/>
    </location>
</feature>
<feature type="active site" description="Nucleophile" evidence="1">
    <location>
        <position position="172"/>
    </location>
</feature>
<feature type="site" description="Contributes to redox potential value" evidence="1">
    <location>
        <position position="50"/>
    </location>
</feature>
<feature type="site" description="Contributes to redox potential value" evidence="1">
    <location>
        <position position="51"/>
    </location>
</feature>
<feature type="site" description="Lowers pKa of C-terminal Cys of first active site" evidence="1">
    <location>
        <position position="115"/>
    </location>
</feature>
<feature type="site" description="Contributes to redox potential value" evidence="1">
    <location>
        <position position="170"/>
    </location>
</feature>
<feature type="site" description="Contributes to redox potential value" evidence="1">
    <location>
        <position position="171"/>
    </location>
</feature>
<feature type="site" description="Lowers pKa of C-terminal Cys of second active site" evidence="1">
    <location>
        <position position="236"/>
    </location>
</feature>
<feature type="disulfide bond" description="Redox-active" evidence="3">
    <location>
        <begin position="49"/>
        <end position="52"/>
    </location>
</feature>
<feature type="disulfide bond" description="Redox-active" evidence="3">
    <location>
        <begin position="169"/>
        <end position="172"/>
    </location>
</feature>
<reference key="1">
    <citation type="journal article" date="1997" name="Gene">
        <title>Isolation and characterisation of a novel stress-inducible PDI-family gene from Aspergillus niger.</title>
        <authorList>
            <person name="Jeenes D.J."/>
            <person name="Pfaller R."/>
            <person name="Archer D.B."/>
        </authorList>
    </citation>
    <scope>NUCLEOTIDE SEQUENCE [GENOMIC DNA]</scope>
    <scope>INDUCTION</scope>
    <source>
        <strain>ATCC 9029 / NRRL 3 / CBS 120.49 / DSM 2466 / N400 / FGSC 732</strain>
    </source>
</reference>
<dbReference type="EC" id="5.3.4.1"/>
<dbReference type="EMBL" id="X98748">
    <property type="protein sequence ID" value="CAA67299.1"/>
    <property type="molecule type" value="Genomic_DNA"/>
</dbReference>
<dbReference type="RefSeq" id="XP_001398661.1">
    <property type="nucleotide sequence ID" value="XM_001398624.3"/>
</dbReference>
<dbReference type="SMR" id="Q00216"/>
<dbReference type="PaxDb" id="5061-CADANGAP00013579"/>
<dbReference type="EnsemblFungi" id="CAK47274">
    <property type="protein sequence ID" value="CAK47274"/>
    <property type="gene ID" value="An18g02020"/>
</dbReference>
<dbReference type="GeneID" id="4989762"/>
<dbReference type="KEGG" id="ang:An18g02020"/>
<dbReference type="VEuPathDB" id="FungiDB:An18g02020"/>
<dbReference type="VEuPathDB" id="FungiDB:ASPNIDRAFT2_1128436"/>
<dbReference type="VEuPathDB" id="FungiDB:ATCC64974_110240"/>
<dbReference type="VEuPathDB" id="FungiDB:M747DRAFT_337590"/>
<dbReference type="eggNOG" id="KOG0191">
    <property type="taxonomic scope" value="Eukaryota"/>
</dbReference>
<dbReference type="OrthoDB" id="10264505at2759"/>
<dbReference type="GO" id="GO:0005788">
    <property type="term" value="C:endoplasmic reticulum lumen"/>
    <property type="evidence" value="ECO:0007669"/>
    <property type="project" value="UniProtKB-SubCell"/>
</dbReference>
<dbReference type="GO" id="GO:0003756">
    <property type="term" value="F:protein disulfide isomerase activity"/>
    <property type="evidence" value="ECO:0007669"/>
    <property type="project" value="UniProtKB-EC"/>
</dbReference>
<dbReference type="GO" id="GO:0051082">
    <property type="term" value="F:unfolded protein binding"/>
    <property type="evidence" value="ECO:0000314"/>
    <property type="project" value="AspGD"/>
</dbReference>
<dbReference type="GO" id="GO:0006457">
    <property type="term" value="P:protein folding"/>
    <property type="evidence" value="ECO:0000314"/>
    <property type="project" value="AspGD"/>
</dbReference>
<dbReference type="CDD" id="cd00238">
    <property type="entry name" value="ERp29c"/>
    <property type="match status" value="1"/>
</dbReference>
<dbReference type="CDD" id="cd02998">
    <property type="entry name" value="PDI_a_ERp38"/>
    <property type="match status" value="2"/>
</dbReference>
<dbReference type="FunFam" id="1.20.1150.12:FF:000002">
    <property type="entry name" value="Disulfide isomerase TigA"/>
    <property type="match status" value="1"/>
</dbReference>
<dbReference type="FunFam" id="3.40.30.10:FF:000032">
    <property type="entry name" value="Protein disulfide-isomerase A6 homolog"/>
    <property type="match status" value="2"/>
</dbReference>
<dbReference type="Gene3D" id="1.20.1150.12">
    <property type="entry name" value="Endoplasmic reticulum resident protein 29, C-terminal domain"/>
    <property type="match status" value="1"/>
</dbReference>
<dbReference type="Gene3D" id="3.40.30.10">
    <property type="entry name" value="Glutaredoxin"/>
    <property type="match status" value="2"/>
</dbReference>
<dbReference type="InterPro" id="IPR011679">
    <property type="entry name" value="ERp29_C"/>
</dbReference>
<dbReference type="InterPro" id="IPR036356">
    <property type="entry name" value="ERp29_C_sf"/>
</dbReference>
<dbReference type="InterPro" id="IPR051063">
    <property type="entry name" value="PDI"/>
</dbReference>
<dbReference type="InterPro" id="IPR005788">
    <property type="entry name" value="PDI_thioredoxin-like_dom"/>
</dbReference>
<dbReference type="InterPro" id="IPR036249">
    <property type="entry name" value="Thioredoxin-like_sf"/>
</dbReference>
<dbReference type="InterPro" id="IPR017937">
    <property type="entry name" value="Thioredoxin_CS"/>
</dbReference>
<dbReference type="InterPro" id="IPR013766">
    <property type="entry name" value="Thioredoxin_domain"/>
</dbReference>
<dbReference type="NCBIfam" id="TIGR01126">
    <property type="entry name" value="pdi_dom"/>
    <property type="match status" value="2"/>
</dbReference>
<dbReference type="PANTHER" id="PTHR45672:SF11">
    <property type="entry name" value="PROTEIN DISULFIDE-ISOMERASE C17H9.14C"/>
    <property type="match status" value="1"/>
</dbReference>
<dbReference type="PANTHER" id="PTHR45672">
    <property type="entry name" value="PROTEIN DISULFIDE-ISOMERASE C17H9.14C-RELATED"/>
    <property type="match status" value="1"/>
</dbReference>
<dbReference type="Pfam" id="PF07749">
    <property type="entry name" value="ERp29"/>
    <property type="match status" value="1"/>
</dbReference>
<dbReference type="Pfam" id="PF00085">
    <property type="entry name" value="Thioredoxin"/>
    <property type="match status" value="2"/>
</dbReference>
<dbReference type="PRINTS" id="PR00421">
    <property type="entry name" value="THIOREDOXIN"/>
</dbReference>
<dbReference type="SUPFAM" id="SSF47933">
    <property type="entry name" value="ERP29 C domain-like"/>
    <property type="match status" value="1"/>
</dbReference>
<dbReference type="SUPFAM" id="SSF52833">
    <property type="entry name" value="Thioredoxin-like"/>
    <property type="match status" value="2"/>
</dbReference>
<dbReference type="PROSITE" id="PS00014">
    <property type="entry name" value="ER_TARGET"/>
    <property type="match status" value="1"/>
</dbReference>
<dbReference type="PROSITE" id="PS00194">
    <property type="entry name" value="THIOREDOXIN_1"/>
    <property type="match status" value="2"/>
</dbReference>
<dbReference type="PROSITE" id="PS51352">
    <property type="entry name" value="THIOREDOXIN_2"/>
    <property type="match status" value="2"/>
</dbReference>
<organism>
    <name type="scientific">Aspergillus niger</name>
    <dbReference type="NCBI Taxonomy" id="5061"/>
    <lineage>
        <taxon>Eukaryota</taxon>
        <taxon>Fungi</taxon>
        <taxon>Dikarya</taxon>
        <taxon>Ascomycota</taxon>
        <taxon>Pezizomycotina</taxon>
        <taxon>Eurotiomycetes</taxon>
        <taxon>Eurotiomycetidae</taxon>
        <taxon>Eurotiales</taxon>
        <taxon>Aspergillaceae</taxon>
        <taxon>Aspergillus</taxon>
        <taxon>Aspergillus subgen. Circumdati</taxon>
    </lineage>
</organism>
<name>TIGA_ASPNG</name>
<keyword id="KW-1015">Disulfide bond</keyword>
<keyword id="KW-0256">Endoplasmic reticulum</keyword>
<keyword id="KW-0413">Isomerase</keyword>
<keyword id="KW-0676">Redox-active center</keyword>
<keyword id="KW-0677">Repeat</keyword>
<keyword id="KW-0732">Signal</keyword>
<keyword id="KW-0346">Stress response</keyword>
<protein>
    <recommendedName>
        <fullName>Protein disulfide-isomerase tigA</fullName>
        <ecNumber>5.3.4.1</ecNumber>
    </recommendedName>
</protein>
<gene>
    <name type="primary">tigA</name>
</gene>
<proteinExistence type="evidence at transcript level"/>
<accession>Q00216</accession>